<name>SYE_PROA2</name>
<gene>
    <name evidence="1" type="primary">gltX</name>
    <name type="ordered locus">Paes_1783</name>
</gene>
<sequence length="503" mass="57531">MQTTLGPRVRTRFAPSPTGYLHVGGLRTALYNYLYAKKVGGDFIVRIEDTDQARKVEGADQSLLKTLEESGIVADESILHGGNFGPYMQSERLDTYAQYCRQLLDQNNAYYCFSTAEELDENRKLQMKQGIQPKYNRKWLPETMGGNMPQSEIQKKLDEGAPYVIRMKVPDYISIMFEDIVRGPVEFDSATVDDQVLMKSDGFPTYHFASVIDDHLMEITHIIRGEEWLSSMPKHLLLYEFFGWEAPRFAHLPLLLNPDRSKLSKRQGDVAVEDFIAKGYSPDAILNFVALLGWNEGEGSEQEIYSLEELVQKFSLERVGKAGAVFNIDKLDWIEKQYIKARPVDQIIQAIKPLLQKELAEKSTDMDVARISSDEYLTQVIDLMRERVNFENEFITFSNYFYFDPETYDEAAVAKRWQDDTNEVLAEFITELEESDDFSADNIEAMLKAFVAPKGKKPAFLIHPLRILSSGVGFGPSLYHMLEVLGKQTVIRRLKKGIERVTV</sequence>
<comment type="function">
    <text evidence="1">Catalyzes the attachment of glutamate to tRNA(Glu) in a two-step reaction: glutamate is first activated by ATP to form Glu-AMP and then transferred to the acceptor end of tRNA(Glu).</text>
</comment>
<comment type="catalytic activity">
    <reaction evidence="1">
        <text>tRNA(Glu) + L-glutamate + ATP = L-glutamyl-tRNA(Glu) + AMP + diphosphate</text>
        <dbReference type="Rhea" id="RHEA:23540"/>
        <dbReference type="Rhea" id="RHEA-COMP:9663"/>
        <dbReference type="Rhea" id="RHEA-COMP:9680"/>
        <dbReference type="ChEBI" id="CHEBI:29985"/>
        <dbReference type="ChEBI" id="CHEBI:30616"/>
        <dbReference type="ChEBI" id="CHEBI:33019"/>
        <dbReference type="ChEBI" id="CHEBI:78442"/>
        <dbReference type="ChEBI" id="CHEBI:78520"/>
        <dbReference type="ChEBI" id="CHEBI:456215"/>
        <dbReference type="EC" id="6.1.1.17"/>
    </reaction>
</comment>
<comment type="subunit">
    <text evidence="1">Monomer.</text>
</comment>
<comment type="subcellular location">
    <subcellularLocation>
        <location evidence="1">Cytoplasm</location>
    </subcellularLocation>
</comment>
<comment type="similarity">
    <text evidence="1">Belongs to the class-I aminoacyl-tRNA synthetase family. Glutamate--tRNA ligase type 1 subfamily.</text>
</comment>
<reference key="1">
    <citation type="submission" date="2008-06" db="EMBL/GenBank/DDBJ databases">
        <title>Complete sequence of chromosome of Prosthecochloris aestuarii DSM 271.</title>
        <authorList>
            <consortium name="US DOE Joint Genome Institute"/>
            <person name="Lucas S."/>
            <person name="Copeland A."/>
            <person name="Lapidus A."/>
            <person name="Glavina del Rio T."/>
            <person name="Dalin E."/>
            <person name="Tice H."/>
            <person name="Bruce D."/>
            <person name="Goodwin L."/>
            <person name="Pitluck S."/>
            <person name="Schmutz J."/>
            <person name="Larimer F."/>
            <person name="Land M."/>
            <person name="Hauser L."/>
            <person name="Kyrpides N."/>
            <person name="Anderson I."/>
            <person name="Liu Z."/>
            <person name="Li T."/>
            <person name="Zhao F."/>
            <person name="Overmann J."/>
            <person name="Bryant D.A."/>
            <person name="Richardson P."/>
        </authorList>
    </citation>
    <scope>NUCLEOTIDE SEQUENCE [LARGE SCALE GENOMIC DNA]</scope>
    <source>
        <strain>DSM 271 / SK 413</strain>
    </source>
</reference>
<accession>B4S404</accession>
<dbReference type="EC" id="6.1.1.17" evidence="1"/>
<dbReference type="EMBL" id="CP001108">
    <property type="protein sequence ID" value="ACF46796.1"/>
    <property type="molecule type" value="Genomic_DNA"/>
</dbReference>
<dbReference type="RefSeq" id="WP_012506329.1">
    <property type="nucleotide sequence ID" value="NC_011059.1"/>
</dbReference>
<dbReference type="SMR" id="B4S404"/>
<dbReference type="STRING" id="290512.Paes_1783"/>
<dbReference type="KEGG" id="paa:Paes_1783"/>
<dbReference type="eggNOG" id="COG0008">
    <property type="taxonomic scope" value="Bacteria"/>
</dbReference>
<dbReference type="HOGENOM" id="CLU_015768_6_3_10"/>
<dbReference type="Proteomes" id="UP000002725">
    <property type="component" value="Chromosome"/>
</dbReference>
<dbReference type="GO" id="GO:0005737">
    <property type="term" value="C:cytoplasm"/>
    <property type="evidence" value="ECO:0007669"/>
    <property type="project" value="UniProtKB-SubCell"/>
</dbReference>
<dbReference type="GO" id="GO:0005524">
    <property type="term" value="F:ATP binding"/>
    <property type="evidence" value="ECO:0007669"/>
    <property type="project" value="UniProtKB-UniRule"/>
</dbReference>
<dbReference type="GO" id="GO:0004818">
    <property type="term" value="F:glutamate-tRNA ligase activity"/>
    <property type="evidence" value="ECO:0007669"/>
    <property type="project" value="UniProtKB-UniRule"/>
</dbReference>
<dbReference type="GO" id="GO:0000049">
    <property type="term" value="F:tRNA binding"/>
    <property type="evidence" value="ECO:0007669"/>
    <property type="project" value="InterPro"/>
</dbReference>
<dbReference type="GO" id="GO:0008270">
    <property type="term" value="F:zinc ion binding"/>
    <property type="evidence" value="ECO:0007669"/>
    <property type="project" value="InterPro"/>
</dbReference>
<dbReference type="GO" id="GO:0006424">
    <property type="term" value="P:glutamyl-tRNA aminoacylation"/>
    <property type="evidence" value="ECO:0007669"/>
    <property type="project" value="UniProtKB-UniRule"/>
</dbReference>
<dbReference type="CDD" id="cd00808">
    <property type="entry name" value="GluRS_core"/>
    <property type="match status" value="1"/>
</dbReference>
<dbReference type="FunFam" id="3.40.50.620:FF:000045">
    <property type="entry name" value="Glutamate--tRNA ligase, mitochondrial"/>
    <property type="match status" value="1"/>
</dbReference>
<dbReference type="Gene3D" id="1.10.10.350">
    <property type="match status" value="1"/>
</dbReference>
<dbReference type="Gene3D" id="1.10.8.70">
    <property type="entry name" value="Glutamate-tRNA synthetase, class I, anticodon-binding domain 1"/>
    <property type="match status" value="1"/>
</dbReference>
<dbReference type="Gene3D" id="3.40.50.620">
    <property type="entry name" value="HUPs"/>
    <property type="match status" value="1"/>
</dbReference>
<dbReference type="HAMAP" id="MF_00022">
    <property type="entry name" value="Glu_tRNA_synth_type1"/>
    <property type="match status" value="1"/>
</dbReference>
<dbReference type="InterPro" id="IPR045462">
    <property type="entry name" value="aa-tRNA-synth_I_cd-bd"/>
</dbReference>
<dbReference type="InterPro" id="IPR020751">
    <property type="entry name" value="aa-tRNA-synth_I_codon-bd_sub2"/>
</dbReference>
<dbReference type="InterPro" id="IPR001412">
    <property type="entry name" value="aa-tRNA-synth_I_CS"/>
</dbReference>
<dbReference type="InterPro" id="IPR008925">
    <property type="entry name" value="aa_tRNA-synth_I_cd-bd_sf"/>
</dbReference>
<dbReference type="InterPro" id="IPR004527">
    <property type="entry name" value="Glu-tRNA-ligase_bac/mito"/>
</dbReference>
<dbReference type="InterPro" id="IPR020752">
    <property type="entry name" value="Glu-tRNA-synth_I_codon-bd_sub1"/>
</dbReference>
<dbReference type="InterPro" id="IPR000924">
    <property type="entry name" value="Glu/Gln-tRNA-synth"/>
</dbReference>
<dbReference type="InterPro" id="IPR020058">
    <property type="entry name" value="Glu/Gln-tRNA-synth_Ib_cat-dom"/>
</dbReference>
<dbReference type="InterPro" id="IPR049940">
    <property type="entry name" value="GluQ/Sye"/>
</dbReference>
<dbReference type="InterPro" id="IPR033910">
    <property type="entry name" value="GluRS_core"/>
</dbReference>
<dbReference type="InterPro" id="IPR014729">
    <property type="entry name" value="Rossmann-like_a/b/a_fold"/>
</dbReference>
<dbReference type="NCBIfam" id="TIGR00464">
    <property type="entry name" value="gltX_bact"/>
    <property type="match status" value="1"/>
</dbReference>
<dbReference type="PANTHER" id="PTHR43311">
    <property type="entry name" value="GLUTAMATE--TRNA LIGASE"/>
    <property type="match status" value="1"/>
</dbReference>
<dbReference type="PANTHER" id="PTHR43311:SF2">
    <property type="entry name" value="GLUTAMATE--TRNA LIGASE, MITOCHONDRIAL-RELATED"/>
    <property type="match status" value="1"/>
</dbReference>
<dbReference type="Pfam" id="PF19269">
    <property type="entry name" value="Anticodon_2"/>
    <property type="match status" value="1"/>
</dbReference>
<dbReference type="Pfam" id="PF00749">
    <property type="entry name" value="tRNA-synt_1c"/>
    <property type="match status" value="1"/>
</dbReference>
<dbReference type="PRINTS" id="PR00987">
    <property type="entry name" value="TRNASYNTHGLU"/>
</dbReference>
<dbReference type="SUPFAM" id="SSF48163">
    <property type="entry name" value="An anticodon-binding domain of class I aminoacyl-tRNA synthetases"/>
    <property type="match status" value="1"/>
</dbReference>
<dbReference type="SUPFAM" id="SSF52374">
    <property type="entry name" value="Nucleotidylyl transferase"/>
    <property type="match status" value="1"/>
</dbReference>
<dbReference type="PROSITE" id="PS00178">
    <property type="entry name" value="AA_TRNA_LIGASE_I"/>
    <property type="match status" value="1"/>
</dbReference>
<proteinExistence type="inferred from homology"/>
<evidence type="ECO:0000255" key="1">
    <source>
        <dbReference type="HAMAP-Rule" id="MF_00022"/>
    </source>
</evidence>
<protein>
    <recommendedName>
        <fullName evidence="1">Glutamate--tRNA ligase</fullName>
        <ecNumber evidence="1">6.1.1.17</ecNumber>
    </recommendedName>
    <alternativeName>
        <fullName evidence="1">Glutamyl-tRNA synthetase</fullName>
        <shortName evidence="1">GluRS</shortName>
    </alternativeName>
</protein>
<organism>
    <name type="scientific">Prosthecochloris aestuarii (strain DSM 271 / SK 413)</name>
    <dbReference type="NCBI Taxonomy" id="290512"/>
    <lineage>
        <taxon>Bacteria</taxon>
        <taxon>Pseudomonadati</taxon>
        <taxon>Chlorobiota</taxon>
        <taxon>Chlorobiia</taxon>
        <taxon>Chlorobiales</taxon>
        <taxon>Chlorobiaceae</taxon>
        <taxon>Prosthecochloris</taxon>
    </lineage>
</organism>
<keyword id="KW-0030">Aminoacyl-tRNA synthetase</keyword>
<keyword id="KW-0067">ATP-binding</keyword>
<keyword id="KW-0963">Cytoplasm</keyword>
<keyword id="KW-0436">Ligase</keyword>
<keyword id="KW-0547">Nucleotide-binding</keyword>
<keyword id="KW-0648">Protein biosynthesis</keyword>
<feature type="chain" id="PRO_0000367738" description="Glutamate--tRNA ligase">
    <location>
        <begin position="1"/>
        <end position="503"/>
    </location>
</feature>
<feature type="short sequence motif" description="'HIGH' region" evidence="1">
    <location>
        <begin position="15"/>
        <end position="25"/>
    </location>
</feature>
<feature type="short sequence motif" description="'KMSKS' region" evidence="1">
    <location>
        <begin position="262"/>
        <end position="266"/>
    </location>
</feature>
<feature type="binding site" evidence="1">
    <location>
        <position position="265"/>
    </location>
    <ligand>
        <name>ATP</name>
        <dbReference type="ChEBI" id="CHEBI:30616"/>
    </ligand>
</feature>